<dbReference type="EC" id="2.7.11.5" evidence="1"/>
<dbReference type="EC" id="3.1.3.-" evidence="1"/>
<dbReference type="EMBL" id="BX571873">
    <property type="protein sequence ID" value="CAE16766.1"/>
    <property type="molecule type" value="Genomic_DNA"/>
</dbReference>
<dbReference type="RefSeq" id="WP_011148484.1">
    <property type="nucleotide sequence ID" value="NC_005126.1"/>
</dbReference>
<dbReference type="SMR" id="Q7MZA0"/>
<dbReference type="STRING" id="243265.plu4394"/>
<dbReference type="GeneID" id="48850604"/>
<dbReference type="KEGG" id="plu:plu4394"/>
<dbReference type="eggNOG" id="COG4579">
    <property type="taxonomic scope" value="Bacteria"/>
</dbReference>
<dbReference type="HOGENOM" id="CLU_033804_1_1_6"/>
<dbReference type="OrthoDB" id="5287793at2"/>
<dbReference type="Proteomes" id="UP000002514">
    <property type="component" value="Chromosome"/>
</dbReference>
<dbReference type="GO" id="GO:0005737">
    <property type="term" value="C:cytoplasm"/>
    <property type="evidence" value="ECO:0007669"/>
    <property type="project" value="UniProtKB-SubCell"/>
</dbReference>
<dbReference type="GO" id="GO:0008772">
    <property type="term" value="F:[isocitrate dehydrogenase (NADP+)] kinase activity"/>
    <property type="evidence" value="ECO:0007669"/>
    <property type="project" value="UniProtKB-UniRule"/>
</dbReference>
<dbReference type="GO" id="GO:0016208">
    <property type="term" value="F:AMP binding"/>
    <property type="evidence" value="ECO:0007669"/>
    <property type="project" value="TreeGrafter"/>
</dbReference>
<dbReference type="GO" id="GO:0005524">
    <property type="term" value="F:ATP binding"/>
    <property type="evidence" value="ECO:0007669"/>
    <property type="project" value="UniProtKB-UniRule"/>
</dbReference>
<dbReference type="GO" id="GO:0004721">
    <property type="term" value="F:phosphoprotein phosphatase activity"/>
    <property type="evidence" value="ECO:0007669"/>
    <property type="project" value="UniProtKB-KW"/>
</dbReference>
<dbReference type="GO" id="GO:0004674">
    <property type="term" value="F:protein serine/threonine kinase activity"/>
    <property type="evidence" value="ECO:0007669"/>
    <property type="project" value="UniProtKB-KW"/>
</dbReference>
<dbReference type="GO" id="GO:0006006">
    <property type="term" value="P:glucose metabolic process"/>
    <property type="evidence" value="ECO:0007669"/>
    <property type="project" value="InterPro"/>
</dbReference>
<dbReference type="GO" id="GO:0006097">
    <property type="term" value="P:glyoxylate cycle"/>
    <property type="evidence" value="ECO:0007669"/>
    <property type="project" value="UniProtKB-UniRule"/>
</dbReference>
<dbReference type="GO" id="GO:0006099">
    <property type="term" value="P:tricarboxylic acid cycle"/>
    <property type="evidence" value="ECO:0007669"/>
    <property type="project" value="UniProtKB-UniRule"/>
</dbReference>
<dbReference type="HAMAP" id="MF_00747">
    <property type="entry name" value="AceK"/>
    <property type="match status" value="1"/>
</dbReference>
<dbReference type="InterPro" id="IPR046855">
    <property type="entry name" value="AceK_kinase"/>
</dbReference>
<dbReference type="InterPro" id="IPR046854">
    <property type="entry name" value="AceK_regulatory"/>
</dbReference>
<dbReference type="InterPro" id="IPR010452">
    <property type="entry name" value="Isocitrate_DH_AceK"/>
</dbReference>
<dbReference type="NCBIfam" id="NF002804">
    <property type="entry name" value="PRK02946.1"/>
    <property type="match status" value="1"/>
</dbReference>
<dbReference type="PANTHER" id="PTHR39559">
    <property type="match status" value="1"/>
</dbReference>
<dbReference type="PANTHER" id="PTHR39559:SF1">
    <property type="entry name" value="ISOCITRATE DEHYDROGENASE KINASE_PHOSPHATASE"/>
    <property type="match status" value="1"/>
</dbReference>
<dbReference type="Pfam" id="PF06315">
    <property type="entry name" value="AceK_kinase"/>
    <property type="match status" value="1"/>
</dbReference>
<dbReference type="Pfam" id="PF20423">
    <property type="entry name" value="AceK_regulatory"/>
    <property type="match status" value="1"/>
</dbReference>
<dbReference type="PIRSF" id="PIRSF000719">
    <property type="entry name" value="AceK"/>
    <property type="match status" value="1"/>
</dbReference>
<comment type="function">
    <text evidence="1">Bifunctional enzyme which can phosphorylate or dephosphorylate isocitrate dehydrogenase (IDH) on a specific serine residue. This is a regulatory mechanism which enables bacteria to bypass the Krebs cycle via the glyoxylate shunt in response to the source of carbon. When bacteria are grown on glucose, IDH is fully active and unphosphorylated, but when grown on acetate or ethanol, the activity of IDH declines drastically concomitant with its phosphorylation.</text>
</comment>
<comment type="catalytic activity">
    <reaction evidence="1">
        <text>L-seryl-[isocitrate dehydrogenase] + ATP = O-phospho-L-seryl-[isocitrate dehydrogenase] + ADP + H(+)</text>
        <dbReference type="Rhea" id="RHEA:43540"/>
        <dbReference type="Rhea" id="RHEA-COMP:10605"/>
        <dbReference type="Rhea" id="RHEA-COMP:10606"/>
        <dbReference type="ChEBI" id="CHEBI:15378"/>
        <dbReference type="ChEBI" id="CHEBI:29999"/>
        <dbReference type="ChEBI" id="CHEBI:30616"/>
        <dbReference type="ChEBI" id="CHEBI:83421"/>
        <dbReference type="ChEBI" id="CHEBI:456216"/>
        <dbReference type="EC" id="2.7.11.5"/>
    </reaction>
</comment>
<comment type="subcellular location">
    <subcellularLocation>
        <location evidence="1">Cytoplasm</location>
    </subcellularLocation>
</comment>
<comment type="similarity">
    <text evidence="1">Belongs to the AceK family.</text>
</comment>
<organism>
    <name type="scientific">Photorhabdus laumondii subsp. laumondii (strain DSM 15139 / CIP 105565 / TT01)</name>
    <name type="common">Photorhabdus luminescens subsp. laumondii</name>
    <dbReference type="NCBI Taxonomy" id="243265"/>
    <lineage>
        <taxon>Bacteria</taxon>
        <taxon>Pseudomonadati</taxon>
        <taxon>Pseudomonadota</taxon>
        <taxon>Gammaproteobacteria</taxon>
        <taxon>Enterobacterales</taxon>
        <taxon>Morganellaceae</taxon>
        <taxon>Photorhabdus</taxon>
    </lineage>
</organism>
<proteinExistence type="inferred from homology"/>
<reference key="1">
    <citation type="journal article" date="2003" name="Nat. Biotechnol.">
        <title>The genome sequence of the entomopathogenic bacterium Photorhabdus luminescens.</title>
        <authorList>
            <person name="Duchaud E."/>
            <person name="Rusniok C."/>
            <person name="Frangeul L."/>
            <person name="Buchrieser C."/>
            <person name="Givaudan A."/>
            <person name="Taourit S."/>
            <person name="Bocs S."/>
            <person name="Boursaux-Eude C."/>
            <person name="Chandler M."/>
            <person name="Charles J.-F."/>
            <person name="Dassa E."/>
            <person name="Derose R."/>
            <person name="Derzelle S."/>
            <person name="Freyssinet G."/>
            <person name="Gaudriault S."/>
            <person name="Medigue C."/>
            <person name="Lanois A."/>
            <person name="Powell K."/>
            <person name="Siguier P."/>
            <person name="Vincent R."/>
            <person name="Wingate V."/>
            <person name="Zouine M."/>
            <person name="Glaser P."/>
            <person name="Boemare N."/>
            <person name="Danchin A."/>
            <person name="Kunst F."/>
        </authorList>
    </citation>
    <scope>NUCLEOTIDE SEQUENCE [LARGE SCALE GENOMIC DNA]</scope>
    <source>
        <strain>DSM 15139 / CIP 105565 / TT01</strain>
    </source>
</reference>
<name>ACEK_PHOLL</name>
<keyword id="KW-0067">ATP-binding</keyword>
<keyword id="KW-0963">Cytoplasm</keyword>
<keyword id="KW-0329">Glyoxylate bypass</keyword>
<keyword id="KW-0378">Hydrolase</keyword>
<keyword id="KW-0418">Kinase</keyword>
<keyword id="KW-0547">Nucleotide-binding</keyword>
<keyword id="KW-0904">Protein phosphatase</keyword>
<keyword id="KW-1185">Reference proteome</keyword>
<keyword id="KW-0723">Serine/threonine-protein kinase</keyword>
<keyword id="KW-0808">Transferase</keyword>
<keyword id="KW-0816">Tricarboxylic acid cycle</keyword>
<protein>
    <recommendedName>
        <fullName evidence="1">Isocitrate dehydrogenase kinase/phosphatase</fullName>
        <shortName evidence="1">IDH kinase/phosphatase</shortName>
        <shortName evidence="1">IDHK/P</shortName>
        <ecNumber evidence="1">2.7.11.5</ecNumber>
        <ecNumber evidence="1">3.1.3.-</ecNumber>
    </recommendedName>
</protein>
<gene>
    <name evidence="1" type="primary">aceK</name>
    <name type="ordered locus">plu4394</name>
</gene>
<accession>Q7MZA0</accession>
<sequence length="585" mass="68791">MGIDSAHLIAQTILQGFDAQYGRFLEVTSGAQQRFEQADWHAVQQAMKKRINLYDHHVGLVVEQLKCIHSAFGYDEEYIAKVKVVYTGLLPDYPRFEIAESFFNSVYCRLFEHRNLTPDKLFIFTSQPARRFRDIPRPLSRDFFPNDNLALMLRTILNDLPLRLPWENLERDIYYITDYLQQTFPVGELLQATFQIANELFYRNKAAWLVGKIRIGGQVYPFLLPIHHNESGGIFIDTCLTDYADASIVFGFARSYFMVYAPLPAALVEWLREILPAKSTSELYMAIGCQKHGKTEYYREYLAFITFSKEQLIIAPGVKGMVMLVFTSPSFDRVFKVIKDQFAPQKEVTQERVQECYRLVKEHDRVGRMADTQEFENFVIDKARISPELMEELQKEVPEKLEDLGDKILIKHLYMERRMTPLNIYMEQVEERKLKDVIEEYGNAIKQLAAANIFPGDMLFKNFGVTRHGRVVFYDYDEICYMTEVNFRDIPPPRYPEDELAGEPWYSVAPNDVFPEEFRHFLCTDSRIRRYFEEMHSDLFKADYWRALQERIRSGHVEDVFAYRRKQRFSQRTEIETYSIAKVSA</sequence>
<evidence type="ECO:0000255" key="1">
    <source>
        <dbReference type="HAMAP-Rule" id="MF_00747"/>
    </source>
</evidence>
<feature type="chain" id="PRO_0000057902" description="Isocitrate dehydrogenase kinase/phosphatase">
    <location>
        <begin position="1"/>
        <end position="585"/>
    </location>
</feature>
<feature type="active site" evidence="1">
    <location>
        <position position="371"/>
    </location>
</feature>
<feature type="binding site" evidence="1">
    <location>
        <begin position="315"/>
        <end position="321"/>
    </location>
    <ligand>
        <name>ATP</name>
        <dbReference type="ChEBI" id="CHEBI:30616"/>
    </ligand>
</feature>
<feature type="binding site" evidence="1">
    <location>
        <position position="336"/>
    </location>
    <ligand>
        <name>ATP</name>
        <dbReference type="ChEBI" id="CHEBI:30616"/>
    </ligand>
</feature>